<gene>
    <name evidence="1" type="primary">rhaR</name>
    <name type="ordered locus">SF3983</name>
    <name type="ordered locus">S3765</name>
</gene>
<protein>
    <recommendedName>
        <fullName evidence="1">HTH-type transcriptional activator RhaR</fullName>
    </recommendedName>
    <alternativeName>
        <fullName evidence="1">L-rhamnose operon transcriptional activator RhaR</fullName>
    </alternativeName>
</protein>
<evidence type="ECO:0000255" key="1">
    <source>
        <dbReference type="HAMAP-Rule" id="MF_01533"/>
    </source>
</evidence>
<evidence type="ECO:0000305" key="2"/>
<proteinExistence type="inferred from homology"/>
<name>RHAR_SHIFL</name>
<sequence length="282" mass="32314">MAHQLKLLKDDFFASDQQAVAVADRYPQDVFAEHTHDFCELVIVWRGNGLHVLNDRPYRITRGDLFYIHADDKHSYASVNDLVLQNIIYCPERLKLNLDWQGAIPGFSASAGQPHWRLGSVGMAQARQVIGQLEHESSQHVPFANEMAELLFGQLVMLLNRHRYTSDSLPPTSSETLLDKLITRLAASLKSPFALDKFCDEASCSERVLRQQFRQQTGMTINQYLRQVRVCHAQYLLQHSRLLISDISTECGFEDSNYFSVVFTRETGMTPSQWRHLNSQKD</sequence>
<reference key="1">
    <citation type="journal article" date="2002" name="Nucleic Acids Res.">
        <title>Genome sequence of Shigella flexneri 2a: insights into pathogenicity through comparison with genomes of Escherichia coli K12 and O157.</title>
        <authorList>
            <person name="Jin Q."/>
            <person name="Yuan Z."/>
            <person name="Xu J."/>
            <person name="Wang Y."/>
            <person name="Shen Y."/>
            <person name="Lu W."/>
            <person name="Wang J."/>
            <person name="Liu H."/>
            <person name="Yang J."/>
            <person name="Yang F."/>
            <person name="Zhang X."/>
            <person name="Zhang J."/>
            <person name="Yang G."/>
            <person name="Wu H."/>
            <person name="Qu D."/>
            <person name="Dong J."/>
            <person name="Sun L."/>
            <person name="Xue Y."/>
            <person name="Zhao A."/>
            <person name="Gao Y."/>
            <person name="Zhu J."/>
            <person name="Kan B."/>
            <person name="Ding K."/>
            <person name="Chen S."/>
            <person name="Cheng H."/>
            <person name="Yao Z."/>
            <person name="He B."/>
            <person name="Chen R."/>
            <person name="Ma D."/>
            <person name="Qiang B."/>
            <person name="Wen Y."/>
            <person name="Hou Y."/>
            <person name="Yu J."/>
        </authorList>
    </citation>
    <scope>NUCLEOTIDE SEQUENCE [LARGE SCALE GENOMIC DNA]</scope>
    <source>
        <strain>301 / Serotype 2a</strain>
    </source>
</reference>
<reference key="2">
    <citation type="journal article" date="2003" name="Infect. Immun.">
        <title>Complete genome sequence and comparative genomics of Shigella flexneri serotype 2a strain 2457T.</title>
        <authorList>
            <person name="Wei J."/>
            <person name="Goldberg M.B."/>
            <person name="Burland V."/>
            <person name="Venkatesan M.M."/>
            <person name="Deng W."/>
            <person name="Fournier G."/>
            <person name="Mayhew G.F."/>
            <person name="Plunkett G. III"/>
            <person name="Rose D.J."/>
            <person name="Darling A."/>
            <person name="Mau B."/>
            <person name="Perna N.T."/>
            <person name="Payne S.M."/>
            <person name="Runyen-Janecky L.J."/>
            <person name="Zhou S."/>
            <person name="Schwartz D.C."/>
            <person name="Blattner F.R."/>
        </authorList>
    </citation>
    <scope>NUCLEOTIDE SEQUENCE [LARGE SCALE GENOMIC DNA]</scope>
    <source>
        <strain>ATCC 700930 / 2457T / Serotype 2a</strain>
    </source>
</reference>
<feature type="chain" id="PRO_0000194560" description="HTH-type transcriptional activator RhaR">
    <location>
        <begin position="1"/>
        <end position="282"/>
    </location>
</feature>
<feature type="domain" description="HTH araC/xylS-type" evidence="1">
    <location>
        <begin position="179"/>
        <end position="277"/>
    </location>
</feature>
<feature type="DNA-binding region" description="H-T-H motif" evidence="1">
    <location>
        <begin position="196"/>
        <end position="217"/>
    </location>
</feature>
<feature type="DNA-binding region" description="H-T-H motif" evidence="1">
    <location>
        <begin position="244"/>
        <end position="267"/>
    </location>
</feature>
<feature type="site" description="Interaction with sigma-70" evidence="1">
    <location>
        <position position="246"/>
    </location>
</feature>
<comment type="function">
    <text evidence="1">Activates expression of the rhaSR operon in response to L-rhamnose.</text>
</comment>
<comment type="subunit">
    <text evidence="1">Binds DNA as a dimer.</text>
</comment>
<comment type="subcellular location">
    <subcellularLocation>
        <location evidence="1">Cytoplasm</location>
    </subcellularLocation>
</comment>
<comment type="sequence caution" evidence="2">
    <conflict type="erroneous initiation">
        <sequence resource="EMBL-CDS" id="AAN45417"/>
    </conflict>
</comment>
<comment type="sequence caution" evidence="2">
    <conflict type="erroneous initiation">
        <sequence resource="EMBL-CDS" id="AAP18782"/>
    </conflict>
</comment>
<dbReference type="EMBL" id="AE005674">
    <property type="protein sequence ID" value="AAN45417.2"/>
    <property type="status" value="ALT_INIT"/>
    <property type="molecule type" value="Genomic_DNA"/>
</dbReference>
<dbReference type="EMBL" id="AE014073">
    <property type="protein sequence ID" value="AAP18782.1"/>
    <property type="status" value="ALT_INIT"/>
    <property type="molecule type" value="Genomic_DNA"/>
</dbReference>
<dbReference type="RefSeq" id="NP_709710.2">
    <property type="nucleotide sequence ID" value="NC_004337.2"/>
</dbReference>
<dbReference type="RefSeq" id="WP_001309108.1">
    <property type="nucleotide sequence ID" value="NZ_WPGW01000095.1"/>
</dbReference>
<dbReference type="SMR" id="Q83PD9"/>
<dbReference type="STRING" id="198214.SF3983"/>
<dbReference type="PaxDb" id="198214-SF3983"/>
<dbReference type="GeneID" id="1025872"/>
<dbReference type="KEGG" id="sfl:SF3983"/>
<dbReference type="KEGG" id="sfx:S3765"/>
<dbReference type="PATRIC" id="fig|198214.7.peg.4693"/>
<dbReference type="HOGENOM" id="CLU_000445_88_5_6"/>
<dbReference type="Proteomes" id="UP000001006">
    <property type="component" value="Chromosome"/>
</dbReference>
<dbReference type="Proteomes" id="UP000002673">
    <property type="component" value="Chromosome"/>
</dbReference>
<dbReference type="GO" id="GO:0005737">
    <property type="term" value="C:cytoplasm"/>
    <property type="evidence" value="ECO:0007669"/>
    <property type="project" value="UniProtKB-SubCell"/>
</dbReference>
<dbReference type="GO" id="GO:0003700">
    <property type="term" value="F:DNA-binding transcription factor activity"/>
    <property type="evidence" value="ECO:0007669"/>
    <property type="project" value="UniProtKB-UniRule"/>
</dbReference>
<dbReference type="GO" id="GO:0043565">
    <property type="term" value="F:sequence-specific DNA binding"/>
    <property type="evidence" value="ECO:0007669"/>
    <property type="project" value="InterPro"/>
</dbReference>
<dbReference type="GO" id="GO:0045893">
    <property type="term" value="P:positive regulation of DNA-templated transcription"/>
    <property type="evidence" value="ECO:0007669"/>
    <property type="project" value="UniProtKB-UniRule"/>
</dbReference>
<dbReference type="GO" id="GO:0019299">
    <property type="term" value="P:rhamnose metabolic process"/>
    <property type="evidence" value="ECO:0007669"/>
    <property type="project" value="UniProtKB-UniRule"/>
</dbReference>
<dbReference type="CDD" id="cd06977">
    <property type="entry name" value="cupin_RhaR_RhaS-like_N"/>
    <property type="match status" value="1"/>
</dbReference>
<dbReference type="Gene3D" id="1.10.10.60">
    <property type="entry name" value="Homeodomain-like"/>
    <property type="match status" value="2"/>
</dbReference>
<dbReference type="Gene3D" id="2.60.120.10">
    <property type="entry name" value="Jelly Rolls"/>
    <property type="match status" value="1"/>
</dbReference>
<dbReference type="HAMAP" id="MF_01533">
    <property type="entry name" value="HTH_type_RhaR"/>
    <property type="match status" value="1"/>
</dbReference>
<dbReference type="InterPro" id="IPR003313">
    <property type="entry name" value="AraC-bd"/>
</dbReference>
<dbReference type="InterPro" id="IPR009057">
    <property type="entry name" value="Homeodomain-like_sf"/>
</dbReference>
<dbReference type="InterPro" id="IPR018060">
    <property type="entry name" value="HTH_AraC"/>
</dbReference>
<dbReference type="InterPro" id="IPR018062">
    <property type="entry name" value="HTH_AraC-typ_CS"/>
</dbReference>
<dbReference type="InterPro" id="IPR047220">
    <property type="entry name" value="RhaR_RhaS-like_N"/>
</dbReference>
<dbReference type="InterPro" id="IPR014710">
    <property type="entry name" value="RmlC-like_jellyroll"/>
</dbReference>
<dbReference type="InterPro" id="IPR011051">
    <property type="entry name" value="RmlC_Cupin_sf"/>
</dbReference>
<dbReference type="InterPro" id="IPR023699">
    <property type="entry name" value="Tscrpt_act_RhaR"/>
</dbReference>
<dbReference type="InterPro" id="IPR020449">
    <property type="entry name" value="Tscrpt_reg_AraC-type_HTH"/>
</dbReference>
<dbReference type="NCBIfam" id="NF010025">
    <property type="entry name" value="PRK13500.1"/>
    <property type="match status" value="1"/>
</dbReference>
<dbReference type="NCBIfam" id="NF010026">
    <property type="entry name" value="PRK13501.1"/>
    <property type="match status" value="1"/>
</dbReference>
<dbReference type="NCBIfam" id="NF010027">
    <property type="entry name" value="PRK13502.1"/>
    <property type="match status" value="1"/>
</dbReference>
<dbReference type="PANTHER" id="PTHR43280">
    <property type="entry name" value="ARAC-FAMILY TRANSCRIPTIONAL REGULATOR"/>
    <property type="match status" value="1"/>
</dbReference>
<dbReference type="PANTHER" id="PTHR43280:SF13">
    <property type="entry name" value="HTH-TYPE TRANSCRIPTIONAL ACTIVATOR RHAR"/>
    <property type="match status" value="1"/>
</dbReference>
<dbReference type="Pfam" id="PF02311">
    <property type="entry name" value="AraC_binding"/>
    <property type="match status" value="1"/>
</dbReference>
<dbReference type="Pfam" id="PF12833">
    <property type="entry name" value="HTH_18"/>
    <property type="match status" value="1"/>
</dbReference>
<dbReference type="PRINTS" id="PR00032">
    <property type="entry name" value="HTHARAC"/>
</dbReference>
<dbReference type="SMART" id="SM00342">
    <property type="entry name" value="HTH_ARAC"/>
    <property type="match status" value="1"/>
</dbReference>
<dbReference type="SUPFAM" id="SSF46689">
    <property type="entry name" value="Homeodomain-like"/>
    <property type="match status" value="2"/>
</dbReference>
<dbReference type="SUPFAM" id="SSF51182">
    <property type="entry name" value="RmlC-like cupins"/>
    <property type="match status" value="1"/>
</dbReference>
<dbReference type="PROSITE" id="PS00041">
    <property type="entry name" value="HTH_ARAC_FAMILY_1"/>
    <property type="match status" value="1"/>
</dbReference>
<dbReference type="PROSITE" id="PS01124">
    <property type="entry name" value="HTH_ARAC_FAMILY_2"/>
    <property type="match status" value="1"/>
</dbReference>
<accession>Q83PD9</accession>
<accession>Q7UB80</accession>
<keyword id="KW-0010">Activator</keyword>
<keyword id="KW-0963">Cytoplasm</keyword>
<keyword id="KW-0238">DNA-binding</keyword>
<keyword id="KW-1185">Reference proteome</keyword>
<keyword id="KW-0677">Repeat</keyword>
<keyword id="KW-0684">Rhamnose metabolism</keyword>
<keyword id="KW-0804">Transcription</keyword>
<keyword id="KW-0805">Transcription regulation</keyword>
<organism>
    <name type="scientific">Shigella flexneri</name>
    <dbReference type="NCBI Taxonomy" id="623"/>
    <lineage>
        <taxon>Bacteria</taxon>
        <taxon>Pseudomonadati</taxon>
        <taxon>Pseudomonadota</taxon>
        <taxon>Gammaproteobacteria</taxon>
        <taxon>Enterobacterales</taxon>
        <taxon>Enterobacteriaceae</taxon>
        <taxon>Shigella</taxon>
    </lineage>
</organism>